<evidence type="ECO:0000255" key="1">
    <source>
        <dbReference type="PROSITE-ProRule" id="PRU00169"/>
    </source>
</evidence>
<evidence type="ECO:0000255" key="2">
    <source>
        <dbReference type="PROSITE-ProRule" id="PRU01091"/>
    </source>
</evidence>
<evidence type="ECO:0000269" key="3">
    <source>
    </source>
</evidence>
<evidence type="ECO:0000269" key="4">
    <source>
    </source>
</evidence>
<evidence type="ECO:0000305" key="5"/>
<name>HSSR_STAAE</name>
<dbReference type="EMBL" id="AP009351">
    <property type="protein sequence ID" value="BAF68535.1"/>
    <property type="molecule type" value="Genomic_DNA"/>
</dbReference>
<dbReference type="RefSeq" id="WP_000249491.1">
    <property type="nucleotide sequence ID" value="NZ_JBBIAE010000004.1"/>
</dbReference>
<dbReference type="SMR" id="A6QJK3"/>
<dbReference type="KEGG" id="sae:NWMN_2263"/>
<dbReference type="HOGENOM" id="CLU_000445_30_3_9"/>
<dbReference type="Proteomes" id="UP000006386">
    <property type="component" value="Chromosome"/>
</dbReference>
<dbReference type="GO" id="GO:0005829">
    <property type="term" value="C:cytosol"/>
    <property type="evidence" value="ECO:0007669"/>
    <property type="project" value="TreeGrafter"/>
</dbReference>
<dbReference type="GO" id="GO:0032993">
    <property type="term" value="C:protein-DNA complex"/>
    <property type="evidence" value="ECO:0007669"/>
    <property type="project" value="TreeGrafter"/>
</dbReference>
<dbReference type="GO" id="GO:0000156">
    <property type="term" value="F:phosphorelay response regulator activity"/>
    <property type="evidence" value="ECO:0007669"/>
    <property type="project" value="TreeGrafter"/>
</dbReference>
<dbReference type="GO" id="GO:0000976">
    <property type="term" value="F:transcription cis-regulatory region binding"/>
    <property type="evidence" value="ECO:0007669"/>
    <property type="project" value="TreeGrafter"/>
</dbReference>
<dbReference type="GO" id="GO:0006355">
    <property type="term" value="P:regulation of DNA-templated transcription"/>
    <property type="evidence" value="ECO:0007669"/>
    <property type="project" value="InterPro"/>
</dbReference>
<dbReference type="CDD" id="cd17574">
    <property type="entry name" value="REC_OmpR"/>
    <property type="match status" value="1"/>
</dbReference>
<dbReference type="CDD" id="cd00383">
    <property type="entry name" value="trans_reg_C"/>
    <property type="match status" value="1"/>
</dbReference>
<dbReference type="FunFam" id="1.10.10.10:FF:000018">
    <property type="entry name" value="DNA-binding response regulator ResD"/>
    <property type="match status" value="1"/>
</dbReference>
<dbReference type="Gene3D" id="3.40.50.2300">
    <property type="match status" value="1"/>
</dbReference>
<dbReference type="Gene3D" id="6.10.250.690">
    <property type="match status" value="1"/>
</dbReference>
<dbReference type="Gene3D" id="1.10.10.10">
    <property type="entry name" value="Winged helix-like DNA-binding domain superfamily/Winged helix DNA-binding domain"/>
    <property type="match status" value="1"/>
</dbReference>
<dbReference type="InterPro" id="IPR011006">
    <property type="entry name" value="CheY-like_superfamily"/>
</dbReference>
<dbReference type="InterPro" id="IPR001867">
    <property type="entry name" value="OmpR/PhoB-type_DNA-bd"/>
</dbReference>
<dbReference type="InterPro" id="IPR001789">
    <property type="entry name" value="Sig_transdc_resp-reg_receiver"/>
</dbReference>
<dbReference type="InterPro" id="IPR039420">
    <property type="entry name" value="WalR-like"/>
</dbReference>
<dbReference type="InterPro" id="IPR036388">
    <property type="entry name" value="WH-like_DNA-bd_sf"/>
</dbReference>
<dbReference type="PANTHER" id="PTHR48111:SF49">
    <property type="entry name" value="HEME RESPONSE REGULATOR HSSR"/>
    <property type="match status" value="1"/>
</dbReference>
<dbReference type="PANTHER" id="PTHR48111">
    <property type="entry name" value="REGULATOR OF RPOS"/>
    <property type="match status" value="1"/>
</dbReference>
<dbReference type="Pfam" id="PF00072">
    <property type="entry name" value="Response_reg"/>
    <property type="match status" value="1"/>
</dbReference>
<dbReference type="Pfam" id="PF00486">
    <property type="entry name" value="Trans_reg_C"/>
    <property type="match status" value="1"/>
</dbReference>
<dbReference type="SMART" id="SM00448">
    <property type="entry name" value="REC"/>
    <property type="match status" value="1"/>
</dbReference>
<dbReference type="SMART" id="SM00862">
    <property type="entry name" value="Trans_reg_C"/>
    <property type="match status" value="1"/>
</dbReference>
<dbReference type="SUPFAM" id="SSF52172">
    <property type="entry name" value="CheY-like"/>
    <property type="match status" value="1"/>
</dbReference>
<dbReference type="PROSITE" id="PS51755">
    <property type="entry name" value="OMPR_PHOB"/>
    <property type="match status" value="1"/>
</dbReference>
<dbReference type="PROSITE" id="PS50110">
    <property type="entry name" value="RESPONSE_REGULATORY"/>
    <property type="match status" value="1"/>
</dbReference>
<keyword id="KW-0010">Activator</keyword>
<keyword id="KW-0963">Cytoplasm</keyword>
<keyword id="KW-0238">DNA-binding</keyword>
<keyword id="KW-0597">Phosphoprotein</keyword>
<keyword id="KW-0804">Transcription</keyword>
<keyword id="KW-0805">Transcription regulation</keyword>
<keyword id="KW-0902">Two-component regulatory system</keyword>
<keyword id="KW-0843">Virulence</keyword>
<accession>A6QJK3</accession>
<gene>
    <name type="primary">hssR</name>
    <name type="ordered locus">NWMN_2263</name>
</gene>
<feature type="chain" id="PRO_0000331330" description="Heme response regulator HssR">
    <location>
        <begin position="1"/>
        <end position="224"/>
    </location>
</feature>
<feature type="domain" description="Response regulatory" evidence="1">
    <location>
        <begin position="3"/>
        <end position="116"/>
    </location>
</feature>
<feature type="DNA-binding region" description="OmpR/PhoB-type" evidence="2">
    <location>
        <begin position="124"/>
        <end position="222"/>
    </location>
</feature>
<feature type="modified residue" description="4-aspartylphosphate" evidence="1 3">
    <location>
        <position position="52"/>
    </location>
</feature>
<feature type="mutagenesis site" description="Abolishes phosphorylation by HssS and binding to hrtAB promoter." evidence="3">
    <original>D</original>
    <variation>A</variation>
    <location>
        <position position="52"/>
    </location>
</feature>
<comment type="function">
    <text evidence="3 4">Member of the two-component regulatory system HssS/HssR involved in intracellular heme homeostasis and tempering of staphylococcal virulence. Phosphorylated HssR binds to a direct repeat sequence within hrtAB promoter and activates the expression of hrtAB, an efflux pump, in response to extracellular heme, hemin, hemoglobin or blood.</text>
</comment>
<comment type="subcellular location">
    <subcellularLocation>
        <location evidence="5">Cytoplasm</location>
    </subcellularLocation>
</comment>
<comment type="PTM">
    <text evidence="3">Phosphorylated by HssS.</text>
</comment>
<organism>
    <name type="scientific">Staphylococcus aureus (strain Newman)</name>
    <dbReference type="NCBI Taxonomy" id="426430"/>
    <lineage>
        <taxon>Bacteria</taxon>
        <taxon>Bacillati</taxon>
        <taxon>Bacillota</taxon>
        <taxon>Bacilli</taxon>
        <taxon>Bacillales</taxon>
        <taxon>Staphylococcaceae</taxon>
        <taxon>Staphylococcus</taxon>
    </lineage>
</organism>
<protein>
    <recommendedName>
        <fullName>Heme response regulator HssR</fullName>
    </recommendedName>
</protein>
<reference key="1">
    <citation type="journal article" date="2008" name="J. Bacteriol.">
        <title>Genome sequence of Staphylococcus aureus strain Newman and comparative analysis of staphylococcal genomes: polymorphism and evolution of two major pathogenicity islands.</title>
        <authorList>
            <person name="Baba T."/>
            <person name="Bae T."/>
            <person name="Schneewind O."/>
            <person name="Takeuchi F."/>
            <person name="Hiramatsu K."/>
        </authorList>
    </citation>
    <scope>NUCLEOTIDE SEQUENCE [LARGE SCALE GENOMIC DNA]</scope>
    <source>
        <strain>Newman</strain>
    </source>
</reference>
<reference key="2">
    <citation type="journal article" date="2007" name="Cell Host Microbe">
        <title>A Staphylococcus aureus regulatory system that responds to host heme and modulates virulence.</title>
        <authorList>
            <person name="Torres V.J."/>
            <person name="Stauff D.L."/>
            <person name="Pishchany G."/>
            <person name="Bezbradica J.S."/>
            <person name="Gordy L.E."/>
            <person name="Iturregui J."/>
            <person name="Anderson K.L."/>
            <person name="Dunman P.M."/>
            <person name="Joyce S."/>
            <person name="Skaar E.P."/>
        </authorList>
    </citation>
    <scope>FUNCTION IN REGULATION OF HRTAB EXPRESSION</scope>
    <scope>MODULATION OF VIRULENCE</scope>
</reference>
<reference key="3">
    <citation type="journal article" date="2007" name="J. Biol. Chem.">
        <title>Signaling and DNA-binding activities of the Staphylococcus aureus HssR-HssS two-component system required for heme sensing.</title>
        <authorList>
            <person name="Stauff D.L."/>
            <person name="Torres V.J."/>
            <person name="Skaar E.P."/>
        </authorList>
    </citation>
    <scope>FUNCTION</scope>
    <scope>REGULATION</scope>
    <scope>PHOSPHORYLATION AT ASP-52</scope>
    <scope>MUTAGENESIS OF ASP-52</scope>
</reference>
<proteinExistence type="evidence at protein level"/>
<sequence length="224" mass="25958">MVQCLVVDDDPRILNYIASHLQIEHIDAYTQPSGEAALKLLEKQRVDIAVVDIMMDGMDGFQLCNTLKNDYDIPVIMLTARDALSDKERAFISGTDDYVTKPFEVKELIFRIRAVLRRYNINSNSEMTIGNLTLNQSYLELQVSNKTMTLPNKEFQLLFMLAARPKQIFTREQIIEKIWGYDYEGDERTVDVHIKRLRQRLKKLNATLTIETVRGQGYKVENHV</sequence>